<keyword id="KW-0002">3D-structure</keyword>
<keyword id="KW-0010">Activator</keyword>
<keyword id="KW-0058">Aromatic hydrocarbons catabolism</keyword>
<keyword id="KW-0238">DNA-binding</keyword>
<keyword id="KW-0804">Transcription</keyword>
<keyword id="KW-0805">Transcription regulation</keyword>
<organism>
    <name type="scientific">Acinetobacter baylyi (strain ATCC 33305 / BD413 / ADP1)</name>
    <dbReference type="NCBI Taxonomy" id="62977"/>
    <lineage>
        <taxon>Bacteria</taxon>
        <taxon>Pseudomonadati</taxon>
        <taxon>Pseudomonadota</taxon>
        <taxon>Gammaproteobacteria</taxon>
        <taxon>Moraxellales</taxon>
        <taxon>Moraxellaceae</taxon>
        <taxon>Acinetobacter</taxon>
    </lineage>
</organism>
<accession>Q43992</accession>
<gene>
    <name type="primary">pobR</name>
    <name type="ordered locus">ACIAD1718</name>
</gene>
<sequence length="271" mass="30764">MEQHHQYLAHPHSSEEIRTEDYIAGLAKGLALLEAFGIDRQRLNVTQVAERTGISRTAARRYLKTLKFLGYLDTDEHYFWLTHRVLRFSSSYLSSAHLPKVAQSFLNLLCAQTSLTFSIVVLDEHEVVPVARSYLPQQDNLRVSPYGMHLGNRLPAHATSTGKVLLSVLDREVQIEWIEKYGLKRLTPYTITDEHTFLETLDAVRQSDYCLSTEEHELGLIAIAVPVLNAQGLTIAALNCMSQTNRVQPQYLIDQVLPLLRNTANELRNLV</sequence>
<dbReference type="EMBL" id="L05770">
    <property type="protein sequence ID" value="AAC37162.1"/>
    <property type="molecule type" value="Genomic_DNA"/>
</dbReference>
<dbReference type="EMBL" id="CR543861">
    <property type="protein sequence ID" value="CAG68560.1"/>
    <property type="molecule type" value="Genomic_DNA"/>
</dbReference>
<dbReference type="PIR" id="A36893">
    <property type="entry name" value="A36893"/>
</dbReference>
<dbReference type="RefSeq" id="WP_004926666.1">
    <property type="nucleotide sequence ID" value="NC_005966.1"/>
</dbReference>
<dbReference type="PDB" id="5HPF">
    <property type="method" value="X-ray"/>
    <property type="resolution" value="2.31 A"/>
    <property type="chains" value="A/B/C=96-271"/>
</dbReference>
<dbReference type="PDB" id="5HPI">
    <property type="method" value="X-ray"/>
    <property type="resolution" value="2.96 A"/>
    <property type="chains" value="A/B/C/D=96-271"/>
</dbReference>
<dbReference type="PDBsum" id="5HPF"/>
<dbReference type="PDBsum" id="5HPI"/>
<dbReference type="SMR" id="Q43992"/>
<dbReference type="STRING" id="202950.GCA_001485005_03096"/>
<dbReference type="GeneID" id="45234105"/>
<dbReference type="KEGG" id="aci:ACIAD1718"/>
<dbReference type="eggNOG" id="COG1414">
    <property type="taxonomic scope" value="Bacteria"/>
</dbReference>
<dbReference type="HOGENOM" id="CLU_062618_0_1_6"/>
<dbReference type="OrthoDB" id="9807558at2"/>
<dbReference type="BioCyc" id="ASP62977:ACIAD_RS07920-MONOMER"/>
<dbReference type="Proteomes" id="UP000000430">
    <property type="component" value="Chromosome"/>
</dbReference>
<dbReference type="GO" id="GO:0003677">
    <property type="term" value="F:DNA binding"/>
    <property type="evidence" value="ECO:0007669"/>
    <property type="project" value="UniProtKB-KW"/>
</dbReference>
<dbReference type="GO" id="GO:0003700">
    <property type="term" value="F:DNA-binding transcription factor activity"/>
    <property type="evidence" value="ECO:0007669"/>
    <property type="project" value="TreeGrafter"/>
</dbReference>
<dbReference type="GO" id="GO:0046278">
    <property type="term" value="P:3,4-dihydroxybenzoate metabolic process"/>
    <property type="evidence" value="ECO:0007669"/>
    <property type="project" value="InterPro"/>
</dbReference>
<dbReference type="GO" id="GO:0009056">
    <property type="term" value="P:catabolic process"/>
    <property type="evidence" value="ECO:0007669"/>
    <property type="project" value="UniProtKB-KW"/>
</dbReference>
<dbReference type="GO" id="GO:0045892">
    <property type="term" value="P:negative regulation of DNA-templated transcription"/>
    <property type="evidence" value="ECO:0007669"/>
    <property type="project" value="TreeGrafter"/>
</dbReference>
<dbReference type="GO" id="GO:0045893">
    <property type="term" value="P:positive regulation of DNA-templated transcription"/>
    <property type="evidence" value="ECO:0007669"/>
    <property type="project" value="InterPro"/>
</dbReference>
<dbReference type="Gene3D" id="3.30.450.40">
    <property type="match status" value="1"/>
</dbReference>
<dbReference type="Gene3D" id="1.10.10.10">
    <property type="entry name" value="Winged helix-like DNA-binding domain superfamily/Winged helix DNA-binding domain"/>
    <property type="match status" value="1"/>
</dbReference>
<dbReference type="InterPro" id="IPR029016">
    <property type="entry name" value="GAF-like_dom_sf"/>
</dbReference>
<dbReference type="InterPro" id="IPR050707">
    <property type="entry name" value="HTH_MetabolicPath_Reg"/>
</dbReference>
<dbReference type="InterPro" id="IPR012794">
    <property type="entry name" value="PcaR_PcaU"/>
</dbReference>
<dbReference type="InterPro" id="IPR014757">
    <property type="entry name" value="Tscrpt_reg_IclR_C"/>
</dbReference>
<dbReference type="InterPro" id="IPR005471">
    <property type="entry name" value="Tscrpt_reg_IclR_N"/>
</dbReference>
<dbReference type="InterPro" id="IPR036388">
    <property type="entry name" value="WH-like_DNA-bd_sf"/>
</dbReference>
<dbReference type="InterPro" id="IPR036390">
    <property type="entry name" value="WH_DNA-bd_sf"/>
</dbReference>
<dbReference type="NCBIfam" id="TIGR02431">
    <property type="entry name" value="pcaR_pcaU"/>
    <property type="match status" value="1"/>
</dbReference>
<dbReference type="PANTHER" id="PTHR30136">
    <property type="entry name" value="HELIX-TURN-HELIX TRANSCRIPTIONAL REGULATOR, ICLR FAMILY"/>
    <property type="match status" value="1"/>
</dbReference>
<dbReference type="PANTHER" id="PTHR30136:SF34">
    <property type="entry name" value="TRANSCRIPTIONAL REGULATOR"/>
    <property type="match status" value="1"/>
</dbReference>
<dbReference type="Pfam" id="PF09339">
    <property type="entry name" value="HTH_IclR"/>
    <property type="match status" value="1"/>
</dbReference>
<dbReference type="Pfam" id="PF01614">
    <property type="entry name" value="IclR_C"/>
    <property type="match status" value="1"/>
</dbReference>
<dbReference type="SMART" id="SM00346">
    <property type="entry name" value="HTH_ICLR"/>
    <property type="match status" value="1"/>
</dbReference>
<dbReference type="SUPFAM" id="SSF55781">
    <property type="entry name" value="GAF domain-like"/>
    <property type="match status" value="1"/>
</dbReference>
<dbReference type="SUPFAM" id="SSF46785">
    <property type="entry name" value="Winged helix' DNA-binding domain"/>
    <property type="match status" value="1"/>
</dbReference>
<dbReference type="PROSITE" id="PS51077">
    <property type="entry name" value="HTH_ICLR"/>
    <property type="match status" value="1"/>
</dbReference>
<dbReference type="PROSITE" id="PS51078">
    <property type="entry name" value="ICLR_ED"/>
    <property type="match status" value="1"/>
</dbReference>
<protein>
    <recommendedName>
        <fullName>p-hydroxybenzoate hydroxylase transcriptional activator</fullName>
    </recommendedName>
</protein>
<evidence type="ECO:0000255" key="1">
    <source>
        <dbReference type="PROSITE-ProRule" id="PRU00393"/>
    </source>
</evidence>
<evidence type="ECO:0000255" key="2">
    <source>
        <dbReference type="PROSITE-ProRule" id="PRU00394"/>
    </source>
</evidence>
<evidence type="ECO:0007829" key="3">
    <source>
        <dbReference type="PDB" id="5HPF"/>
    </source>
</evidence>
<evidence type="ECO:0007829" key="4">
    <source>
        <dbReference type="PDB" id="5HPI"/>
    </source>
</evidence>
<proteinExistence type="evidence at protein level"/>
<feature type="chain" id="PRO_0000201766" description="p-hydroxybenzoate hydroxylase transcriptional activator">
    <location>
        <begin position="1"/>
        <end position="271"/>
    </location>
</feature>
<feature type="domain" description="HTH iclR-type" evidence="1">
    <location>
        <begin position="23"/>
        <end position="83"/>
    </location>
</feature>
<feature type="domain" description="IclR-ED" evidence="2">
    <location>
        <begin position="98"/>
        <end position="271"/>
    </location>
</feature>
<feature type="DNA-binding region" description="H-T-H motif" evidence="1">
    <location>
        <begin position="45"/>
        <end position="64"/>
    </location>
</feature>
<feature type="mutagenesis site" description="In ADP249; loss of activity.">
    <original>R</original>
    <variation>H</variation>
    <location>
        <position position="61"/>
    </location>
</feature>
<feature type="helix" evidence="3">
    <location>
        <begin position="97"/>
        <end position="113"/>
    </location>
</feature>
<feature type="strand" evidence="3">
    <location>
        <begin position="116"/>
        <end position="123"/>
    </location>
</feature>
<feature type="strand" evidence="3">
    <location>
        <begin position="126"/>
        <end position="132"/>
    </location>
</feature>
<feature type="turn" evidence="3">
    <location>
        <begin position="136"/>
        <end position="138"/>
    </location>
</feature>
<feature type="turn" evidence="4">
    <location>
        <begin position="146"/>
        <end position="148"/>
    </location>
</feature>
<feature type="helix" evidence="3">
    <location>
        <begin position="156"/>
        <end position="158"/>
    </location>
</feature>
<feature type="helix" evidence="3">
    <location>
        <begin position="160"/>
        <end position="167"/>
    </location>
</feature>
<feature type="helix" evidence="3">
    <location>
        <begin position="171"/>
        <end position="181"/>
    </location>
</feature>
<feature type="helix" evidence="3">
    <location>
        <begin position="194"/>
        <end position="207"/>
    </location>
</feature>
<feature type="strand" evidence="3">
    <location>
        <begin position="210"/>
        <end position="217"/>
    </location>
</feature>
<feature type="strand" evidence="3">
    <location>
        <begin position="220"/>
        <end position="228"/>
    </location>
</feature>
<feature type="strand" evidence="3">
    <location>
        <begin position="234"/>
        <end position="243"/>
    </location>
</feature>
<feature type="turn" evidence="3">
    <location>
        <begin position="244"/>
        <end position="246"/>
    </location>
</feature>
<feature type="helix" evidence="3">
    <location>
        <begin position="249"/>
        <end position="254"/>
    </location>
</feature>
<feature type="helix" evidence="3">
    <location>
        <begin position="256"/>
        <end position="270"/>
    </location>
</feature>
<comment type="function">
    <text>Positive regulator of the pobA gene for p-hydroxybenzoate hydroxylase.</text>
</comment>
<comment type="induction">
    <text>By p-hydroxybenzoate.</text>
</comment>
<name>POBR_ACIAD</name>
<reference key="1">
    <citation type="journal article" date="1993" name="J. Bacteriol.">
        <title>Identification of the transcriptional activator pobR and characterization of its role in the expression of pobA, the structural gene for p-hydroxybenzoate hydroxylase in Acinetobacter calcoaceticus.</title>
        <authorList>
            <person name="Dimarco A.A."/>
            <person name="Averhoff B.A."/>
            <person name="Ornston L.N."/>
        </authorList>
    </citation>
    <scope>NUCLEOTIDE SEQUENCE [GENOMIC DNA]</scope>
</reference>
<reference key="2">
    <citation type="journal article" date="2004" name="Nucleic Acids Res.">
        <title>Unique features revealed by the genome sequence of Acinetobacter sp. ADP1, a versatile and naturally transformation competent bacterium.</title>
        <authorList>
            <person name="Barbe V."/>
            <person name="Vallenet D."/>
            <person name="Fonknechten N."/>
            <person name="Kreimeyer A."/>
            <person name="Oztas S."/>
            <person name="Labarre L."/>
            <person name="Cruveiller S."/>
            <person name="Robert C."/>
            <person name="Duprat S."/>
            <person name="Wincker P."/>
            <person name="Ornston L.N."/>
            <person name="Weissenbach J."/>
            <person name="Marliere P."/>
            <person name="Cohen G.N."/>
            <person name="Medigue C."/>
        </authorList>
    </citation>
    <scope>NUCLEOTIDE SEQUENCE [LARGE SCALE GENOMIC DNA]</scope>
    <source>
        <strain>ATCC 33305 / BD413 / ADP1</strain>
    </source>
</reference>